<name>ARGD_SHEON</name>
<accession>P59320</accession>
<dbReference type="EC" id="2.6.1.11" evidence="1"/>
<dbReference type="EMBL" id="AE014299">
    <property type="protein sequence ID" value="AAN53695.1"/>
    <property type="molecule type" value="Genomic_DNA"/>
</dbReference>
<dbReference type="RefSeq" id="NP_716250.1">
    <property type="nucleotide sequence ID" value="NC_004347.2"/>
</dbReference>
<dbReference type="RefSeq" id="WP_011070947.1">
    <property type="nucleotide sequence ID" value="NC_004347.2"/>
</dbReference>
<dbReference type="SMR" id="P59320"/>
<dbReference type="STRING" id="211586.SO_0617"/>
<dbReference type="PaxDb" id="211586-SO_0617"/>
<dbReference type="KEGG" id="son:SO_0617"/>
<dbReference type="PATRIC" id="fig|211586.12.peg.595"/>
<dbReference type="eggNOG" id="COG4992">
    <property type="taxonomic scope" value="Bacteria"/>
</dbReference>
<dbReference type="HOGENOM" id="CLU_016922_10_1_6"/>
<dbReference type="OrthoDB" id="9801052at2"/>
<dbReference type="PhylomeDB" id="P59320"/>
<dbReference type="BioCyc" id="SONE211586:G1GMP-586-MONOMER"/>
<dbReference type="UniPathway" id="UPA00068">
    <property type="reaction ID" value="UER00109"/>
</dbReference>
<dbReference type="Proteomes" id="UP000008186">
    <property type="component" value="Chromosome"/>
</dbReference>
<dbReference type="GO" id="GO:0005737">
    <property type="term" value="C:cytoplasm"/>
    <property type="evidence" value="ECO:0007669"/>
    <property type="project" value="UniProtKB-SubCell"/>
</dbReference>
<dbReference type="GO" id="GO:0042802">
    <property type="term" value="F:identical protein binding"/>
    <property type="evidence" value="ECO:0000318"/>
    <property type="project" value="GO_Central"/>
</dbReference>
<dbReference type="GO" id="GO:0003992">
    <property type="term" value="F:N2-acetyl-L-ornithine:2-oxoglutarate 5-aminotransferase activity"/>
    <property type="evidence" value="ECO:0007669"/>
    <property type="project" value="UniProtKB-UniRule"/>
</dbReference>
<dbReference type="GO" id="GO:0030170">
    <property type="term" value="F:pyridoxal phosphate binding"/>
    <property type="evidence" value="ECO:0000318"/>
    <property type="project" value="GO_Central"/>
</dbReference>
<dbReference type="GO" id="GO:0006526">
    <property type="term" value="P:L-arginine biosynthetic process"/>
    <property type="evidence" value="ECO:0007669"/>
    <property type="project" value="UniProtKB-UniRule"/>
</dbReference>
<dbReference type="CDD" id="cd00610">
    <property type="entry name" value="OAT_like"/>
    <property type="match status" value="1"/>
</dbReference>
<dbReference type="FunFam" id="3.40.640.10:FF:000004">
    <property type="entry name" value="Acetylornithine aminotransferase"/>
    <property type="match status" value="1"/>
</dbReference>
<dbReference type="Gene3D" id="3.90.1150.10">
    <property type="entry name" value="Aspartate Aminotransferase, domain 1"/>
    <property type="match status" value="1"/>
</dbReference>
<dbReference type="Gene3D" id="3.40.640.10">
    <property type="entry name" value="Type I PLP-dependent aspartate aminotransferase-like (Major domain)"/>
    <property type="match status" value="1"/>
</dbReference>
<dbReference type="HAMAP" id="MF_01107">
    <property type="entry name" value="ArgD_aminotrans_3"/>
    <property type="match status" value="1"/>
</dbReference>
<dbReference type="InterPro" id="IPR017652">
    <property type="entry name" value="Ac/SucOrn_transaminase_bac"/>
</dbReference>
<dbReference type="InterPro" id="IPR004636">
    <property type="entry name" value="AcOrn/SuccOrn_fam"/>
</dbReference>
<dbReference type="InterPro" id="IPR005814">
    <property type="entry name" value="Aminotrans_3"/>
</dbReference>
<dbReference type="InterPro" id="IPR049704">
    <property type="entry name" value="Aminotrans_3_PPA_site"/>
</dbReference>
<dbReference type="InterPro" id="IPR050103">
    <property type="entry name" value="Class-III_PLP-dep_AT"/>
</dbReference>
<dbReference type="InterPro" id="IPR015424">
    <property type="entry name" value="PyrdxlP-dep_Trfase"/>
</dbReference>
<dbReference type="InterPro" id="IPR015421">
    <property type="entry name" value="PyrdxlP-dep_Trfase_major"/>
</dbReference>
<dbReference type="InterPro" id="IPR015422">
    <property type="entry name" value="PyrdxlP-dep_Trfase_small"/>
</dbReference>
<dbReference type="NCBIfam" id="TIGR03246">
    <property type="entry name" value="arg_catab_astC"/>
    <property type="match status" value="1"/>
</dbReference>
<dbReference type="NCBIfam" id="TIGR00707">
    <property type="entry name" value="argD"/>
    <property type="match status" value="1"/>
</dbReference>
<dbReference type="NCBIfam" id="NF002325">
    <property type="entry name" value="PRK01278.1"/>
    <property type="match status" value="1"/>
</dbReference>
<dbReference type="NCBIfam" id="NF003468">
    <property type="entry name" value="PRK05093.1"/>
    <property type="match status" value="1"/>
</dbReference>
<dbReference type="NCBIfam" id="NF009047">
    <property type="entry name" value="PRK12381.1"/>
    <property type="match status" value="1"/>
</dbReference>
<dbReference type="PANTHER" id="PTHR11986">
    <property type="entry name" value="AMINOTRANSFERASE CLASS III"/>
    <property type="match status" value="1"/>
</dbReference>
<dbReference type="PANTHER" id="PTHR11986:SF113">
    <property type="entry name" value="SUCCINYLORNITHINE TRANSAMINASE"/>
    <property type="match status" value="1"/>
</dbReference>
<dbReference type="Pfam" id="PF00202">
    <property type="entry name" value="Aminotran_3"/>
    <property type="match status" value="1"/>
</dbReference>
<dbReference type="PIRSF" id="PIRSF000521">
    <property type="entry name" value="Transaminase_4ab_Lys_Orn"/>
    <property type="match status" value="1"/>
</dbReference>
<dbReference type="SUPFAM" id="SSF53383">
    <property type="entry name" value="PLP-dependent transferases"/>
    <property type="match status" value="1"/>
</dbReference>
<dbReference type="PROSITE" id="PS00600">
    <property type="entry name" value="AA_TRANSFER_CLASS_3"/>
    <property type="match status" value="1"/>
</dbReference>
<feature type="chain" id="PRO_0000112778" description="Acetylornithine aminotransferase">
    <location>
        <begin position="1"/>
        <end position="405"/>
    </location>
</feature>
<feature type="binding site" evidence="1">
    <location>
        <begin position="107"/>
        <end position="108"/>
    </location>
    <ligand>
        <name>pyridoxal 5'-phosphate</name>
        <dbReference type="ChEBI" id="CHEBI:597326"/>
    </ligand>
</feature>
<feature type="binding site" evidence="1">
    <location>
        <position position="140"/>
    </location>
    <ligand>
        <name>pyridoxal 5'-phosphate</name>
        <dbReference type="ChEBI" id="CHEBI:597326"/>
    </ligand>
</feature>
<feature type="binding site" evidence="1">
    <location>
        <position position="143"/>
    </location>
    <ligand>
        <name>N(2)-acetyl-L-ornithine</name>
        <dbReference type="ChEBI" id="CHEBI:57805"/>
    </ligand>
</feature>
<feature type="binding site" evidence="1">
    <location>
        <begin position="225"/>
        <end position="228"/>
    </location>
    <ligand>
        <name>pyridoxal 5'-phosphate</name>
        <dbReference type="ChEBI" id="CHEBI:597326"/>
    </ligand>
</feature>
<feature type="binding site" evidence="1">
    <location>
        <position position="282"/>
    </location>
    <ligand>
        <name>N(2)-acetyl-L-ornithine</name>
        <dbReference type="ChEBI" id="CHEBI:57805"/>
    </ligand>
</feature>
<feature type="binding site" evidence="1">
    <location>
        <position position="283"/>
    </location>
    <ligand>
        <name>pyridoxal 5'-phosphate</name>
        <dbReference type="ChEBI" id="CHEBI:597326"/>
    </ligand>
</feature>
<feature type="modified residue" description="N6-(pyridoxal phosphate)lysine" evidence="1">
    <location>
        <position position="254"/>
    </location>
</feature>
<comment type="catalytic activity">
    <reaction evidence="1">
        <text>N(2)-acetyl-L-ornithine + 2-oxoglutarate = N-acetyl-L-glutamate 5-semialdehyde + L-glutamate</text>
        <dbReference type="Rhea" id="RHEA:18049"/>
        <dbReference type="ChEBI" id="CHEBI:16810"/>
        <dbReference type="ChEBI" id="CHEBI:29123"/>
        <dbReference type="ChEBI" id="CHEBI:29985"/>
        <dbReference type="ChEBI" id="CHEBI:57805"/>
        <dbReference type="EC" id="2.6.1.11"/>
    </reaction>
</comment>
<comment type="cofactor">
    <cofactor evidence="1">
        <name>pyridoxal 5'-phosphate</name>
        <dbReference type="ChEBI" id="CHEBI:597326"/>
    </cofactor>
    <text evidence="1">Binds 1 pyridoxal phosphate per subunit.</text>
</comment>
<comment type="pathway">
    <text evidence="1">Amino-acid biosynthesis; L-arginine biosynthesis; N(2)-acetyl-L-ornithine from L-glutamate: step 4/4.</text>
</comment>
<comment type="subunit">
    <text evidence="1">Homodimer.</text>
</comment>
<comment type="subcellular location">
    <subcellularLocation>
        <location evidence="1">Cytoplasm</location>
    </subcellularLocation>
</comment>
<comment type="miscellaneous">
    <text evidence="1">May also have succinyldiaminopimelate aminotransferase activity, thus carrying out the corresponding step in lysine biosynthesis.</text>
</comment>
<comment type="similarity">
    <text evidence="1">Belongs to the class-III pyridoxal-phosphate-dependent aminotransferase family. ArgD subfamily.</text>
</comment>
<sequence>MSVDMKLNRAQFDAVMVPNYAPAAVIPVRGEGSRVWDQEGNEFIDFAGGIAVNCLGHCHPALVNALKTQGEKLWHLSNVMTNEPALELATKLVNSTFAERVYFANSGAEANEAALKLARRYALEKHGVEKDEIIAFDKAFHGRTFFTVSVGGQAAYSDGFGPKPQSITHLPFNDVAALEAAVSDKTCAIMLEPLQGEGGIIDADPAFLKAVRELANKHNALVIFDEVQTGVGRTGELYAYMGTDIVPDILTTAKALGGGFPIAAMLTTTEIAEHLKVGTHGSTYGGNPLACAIGNAVLDVVNTPEVLNGVKHREQLLRDGLNKINEKYHVFSEVRGKGLLLGAVLNEQYQGRSRDFLVASVAEGLMSLMAGANVVRFAPSLVIPEADIAEGLARFERAVASIAAA</sequence>
<evidence type="ECO:0000255" key="1">
    <source>
        <dbReference type="HAMAP-Rule" id="MF_01107"/>
    </source>
</evidence>
<reference key="1">
    <citation type="journal article" date="2002" name="Nat. Biotechnol.">
        <title>Genome sequence of the dissimilatory metal ion-reducing bacterium Shewanella oneidensis.</title>
        <authorList>
            <person name="Heidelberg J.F."/>
            <person name="Paulsen I.T."/>
            <person name="Nelson K.E."/>
            <person name="Gaidos E.J."/>
            <person name="Nelson W.C."/>
            <person name="Read T.D."/>
            <person name="Eisen J.A."/>
            <person name="Seshadri R."/>
            <person name="Ward N.L."/>
            <person name="Methe B.A."/>
            <person name="Clayton R.A."/>
            <person name="Meyer T."/>
            <person name="Tsapin A."/>
            <person name="Scott J."/>
            <person name="Beanan M.J."/>
            <person name="Brinkac L.M."/>
            <person name="Daugherty S.C."/>
            <person name="DeBoy R.T."/>
            <person name="Dodson R.J."/>
            <person name="Durkin A.S."/>
            <person name="Haft D.H."/>
            <person name="Kolonay J.F."/>
            <person name="Madupu R."/>
            <person name="Peterson J.D."/>
            <person name="Umayam L.A."/>
            <person name="White O."/>
            <person name="Wolf A.M."/>
            <person name="Vamathevan J.J."/>
            <person name="Weidman J.F."/>
            <person name="Impraim M."/>
            <person name="Lee K."/>
            <person name="Berry K.J."/>
            <person name="Lee C."/>
            <person name="Mueller J."/>
            <person name="Khouri H.M."/>
            <person name="Gill J."/>
            <person name="Utterback T.R."/>
            <person name="McDonald L.A."/>
            <person name="Feldblyum T.V."/>
            <person name="Smith H.O."/>
            <person name="Venter J.C."/>
            <person name="Nealson K.H."/>
            <person name="Fraser C.M."/>
        </authorList>
    </citation>
    <scope>NUCLEOTIDE SEQUENCE [LARGE SCALE GENOMIC DNA]</scope>
    <source>
        <strain>ATCC 700550 / JCM 31522 / CIP 106686 / LMG 19005 / NCIMB 14063 / MR-1</strain>
    </source>
</reference>
<organism>
    <name type="scientific">Shewanella oneidensis (strain ATCC 700550 / JCM 31522 / CIP 106686 / LMG 19005 / NCIMB 14063 / MR-1)</name>
    <dbReference type="NCBI Taxonomy" id="211586"/>
    <lineage>
        <taxon>Bacteria</taxon>
        <taxon>Pseudomonadati</taxon>
        <taxon>Pseudomonadota</taxon>
        <taxon>Gammaproteobacteria</taxon>
        <taxon>Alteromonadales</taxon>
        <taxon>Shewanellaceae</taxon>
        <taxon>Shewanella</taxon>
    </lineage>
</organism>
<gene>
    <name evidence="1" type="primary">argD</name>
    <name type="ordered locus">SO_0617</name>
</gene>
<protein>
    <recommendedName>
        <fullName evidence="1">Acetylornithine aminotransferase</fullName>
        <shortName evidence="1">ACOAT</shortName>
        <ecNumber evidence="1">2.6.1.11</ecNumber>
    </recommendedName>
</protein>
<proteinExistence type="inferred from homology"/>
<keyword id="KW-0028">Amino-acid biosynthesis</keyword>
<keyword id="KW-0032">Aminotransferase</keyword>
<keyword id="KW-0055">Arginine biosynthesis</keyword>
<keyword id="KW-0963">Cytoplasm</keyword>
<keyword id="KW-0663">Pyridoxal phosphate</keyword>
<keyword id="KW-1185">Reference proteome</keyword>
<keyword id="KW-0808">Transferase</keyword>